<dbReference type="EMBL" id="CP000109">
    <property type="protein sequence ID" value="ABB40938.1"/>
    <property type="molecule type" value="Genomic_DNA"/>
</dbReference>
<dbReference type="SMR" id="Q31IT5"/>
<dbReference type="STRING" id="317025.Tcr_0342"/>
<dbReference type="KEGG" id="tcx:Tcr_0342"/>
<dbReference type="eggNOG" id="COG0211">
    <property type="taxonomic scope" value="Bacteria"/>
</dbReference>
<dbReference type="HOGENOM" id="CLU_095424_4_0_6"/>
<dbReference type="OrthoDB" id="9803474at2"/>
<dbReference type="GO" id="GO:0022625">
    <property type="term" value="C:cytosolic large ribosomal subunit"/>
    <property type="evidence" value="ECO:0007669"/>
    <property type="project" value="TreeGrafter"/>
</dbReference>
<dbReference type="GO" id="GO:0003735">
    <property type="term" value="F:structural constituent of ribosome"/>
    <property type="evidence" value="ECO:0007669"/>
    <property type="project" value="InterPro"/>
</dbReference>
<dbReference type="GO" id="GO:0006412">
    <property type="term" value="P:translation"/>
    <property type="evidence" value="ECO:0007669"/>
    <property type="project" value="UniProtKB-UniRule"/>
</dbReference>
<dbReference type="FunFam" id="2.40.50.100:FF:000020">
    <property type="entry name" value="50S ribosomal protein L27"/>
    <property type="match status" value="1"/>
</dbReference>
<dbReference type="Gene3D" id="2.40.50.100">
    <property type="match status" value="1"/>
</dbReference>
<dbReference type="HAMAP" id="MF_00539">
    <property type="entry name" value="Ribosomal_bL27"/>
    <property type="match status" value="1"/>
</dbReference>
<dbReference type="InterPro" id="IPR001684">
    <property type="entry name" value="Ribosomal_bL27"/>
</dbReference>
<dbReference type="InterPro" id="IPR018261">
    <property type="entry name" value="Ribosomal_bL27_CS"/>
</dbReference>
<dbReference type="NCBIfam" id="TIGR00062">
    <property type="entry name" value="L27"/>
    <property type="match status" value="1"/>
</dbReference>
<dbReference type="PANTHER" id="PTHR15893:SF0">
    <property type="entry name" value="LARGE RIBOSOMAL SUBUNIT PROTEIN BL27M"/>
    <property type="match status" value="1"/>
</dbReference>
<dbReference type="PANTHER" id="PTHR15893">
    <property type="entry name" value="RIBOSOMAL PROTEIN L27"/>
    <property type="match status" value="1"/>
</dbReference>
<dbReference type="Pfam" id="PF01016">
    <property type="entry name" value="Ribosomal_L27"/>
    <property type="match status" value="1"/>
</dbReference>
<dbReference type="PRINTS" id="PR00063">
    <property type="entry name" value="RIBOSOMALL27"/>
</dbReference>
<dbReference type="SUPFAM" id="SSF110324">
    <property type="entry name" value="Ribosomal L27 protein-like"/>
    <property type="match status" value="1"/>
</dbReference>
<dbReference type="PROSITE" id="PS00831">
    <property type="entry name" value="RIBOSOMAL_L27"/>
    <property type="match status" value="1"/>
</dbReference>
<comment type="similarity">
    <text evidence="1">Belongs to the bacterial ribosomal protein bL27 family.</text>
</comment>
<protein>
    <recommendedName>
        <fullName evidence="1">Large ribosomal subunit protein bL27</fullName>
    </recommendedName>
    <alternativeName>
        <fullName evidence="3">50S ribosomal protein L27</fullName>
    </alternativeName>
</protein>
<reference key="1">
    <citation type="journal article" date="2006" name="PLoS Biol.">
        <title>The genome of deep-sea vent chemolithoautotroph Thiomicrospira crunogena XCL-2.</title>
        <authorList>
            <person name="Scott K.M."/>
            <person name="Sievert S.M."/>
            <person name="Abril F.N."/>
            <person name="Ball L.A."/>
            <person name="Barrett C.J."/>
            <person name="Blake R.A."/>
            <person name="Boller A.J."/>
            <person name="Chain P.S.G."/>
            <person name="Clark J.A."/>
            <person name="Davis C.R."/>
            <person name="Detter C."/>
            <person name="Do K.F."/>
            <person name="Dobrinski K.P."/>
            <person name="Faza B.I."/>
            <person name="Fitzpatrick K.A."/>
            <person name="Freyermuth S.K."/>
            <person name="Harmer T.L."/>
            <person name="Hauser L.J."/>
            <person name="Huegler M."/>
            <person name="Kerfeld C.A."/>
            <person name="Klotz M.G."/>
            <person name="Kong W.W."/>
            <person name="Land M."/>
            <person name="Lapidus A."/>
            <person name="Larimer F.W."/>
            <person name="Longo D.L."/>
            <person name="Lucas S."/>
            <person name="Malfatti S.A."/>
            <person name="Massey S.E."/>
            <person name="Martin D.D."/>
            <person name="McCuddin Z."/>
            <person name="Meyer F."/>
            <person name="Moore J.L."/>
            <person name="Ocampo L.H. Jr."/>
            <person name="Paul J.H."/>
            <person name="Paulsen I.T."/>
            <person name="Reep D.K."/>
            <person name="Ren Q."/>
            <person name="Ross R.L."/>
            <person name="Sato P.Y."/>
            <person name="Thomas P."/>
            <person name="Tinkham L.E."/>
            <person name="Zeruth G.T."/>
        </authorList>
    </citation>
    <scope>NUCLEOTIDE SEQUENCE [LARGE SCALE GENOMIC DNA]</scope>
    <source>
        <strain>DSM 25203 / XCL-2</strain>
    </source>
</reference>
<name>RL27_HYDCU</name>
<organism>
    <name type="scientific">Hydrogenovibrio crunogenus (strain DSM 25203 / XCL-2)</name>
    <name type="common">Thiomicrospira crunogena</name>
    <dbReference type="NCBI Taxonomy" id="317025"/>
    <lineage>
        <taxon>Bacteria</taxon>
        <taxon>Pseudomonadati</taxon>
        <taxon>Pseudomonadota</taxon>
        <taxon>Gammaproteobacteria</taxon>
        <taxon>Thiotrichales</taxon>
        <taxon>Piscirickettsiaceae</taxon>
        <taxon>Hydrogenovibrio</taxon>
    </lineage>
</organism>
<accession>Q31IT5</accession>
<gene>
    <name evidence="1" type="primary">rpmA</name>
    <name type="ordered locus">Tcr_0342</name>
</gene>
<keyword id="KW-0687">Ribonucleoprotein</keyword>
<keyword id="KW-0689">Ribosomal protein</keyword>
<sequence>MAHKKAAGSTKNGRDSNAKRLGVKRFGGEQVLAGSIIVRQRGTKFHAGDNVGRGKDDTLFAKATGEVAFVTKGKPLRTFVTIKAD</sequence>
<evidence type="ECO:0000255" key="1">
    <source>
        <dbReference type="HAMAP-Rule" id="MF_00539"/>
    </source>
</evidence>
<evidence type="ECO:0000256" key="2">
    <source>
        <dbReference type="SAM" id="MobiDB-lite"/>
    </source>
</evidence>
<evidence type="ECO:0000305" key="3"/>
<proteinExistence type="inferred from homology"/>
<feature type="chain" id="PRO_1000017639" description="Large ribosomal subunit protein bL27">
    <location>
        <begin position="1"/>
        <end position="85"/>
    </location>
</feature>
<feature type="region of interest" description="Disordered" evidence="2">
    <location>
        <begin position="1"/>
        <end position="21"/>
    </location>
</feature>